<keyword id="KW-1003">Cell membrane</keyword>
<keyword id="KW-0297">G-protein coupled receptor</keyword>
<keyword id="KW-0325">Glycoprotein</keyword>
<keyword id="KW-0472">Membrane</keyword>
<keyword id="KW-0675">Receptor</keyword>
<keyword id="KW-1185">Reference proteome</keyword>
<keyword id="KW-0807">Transducer</keyword>
<keyword id="KW-0812">Transmembrane</keyword>
<keyword id="KW-1133">Transmembrane helix</keyword>
<feature type="chain" id="PRO_0000069581" description="Probable G-protein coupled receptor 63">
    <location>
        <begin position="1"/>
        <end position="419"/>
    </location>
</feature>
<feature type="topological domain" description="Extracellular" evidence="1">
    <location>
        <begin position="1"/>
        <end position="81"/>
    </location>
</feature>
<feature type="transmembrane region" description="Helical; Name=1" evidence="1">
    <location>
        <begin position="82"/>
        <end position="104"/>
    </location>
</feature>
<feature type="topological domain" description="Cytoplasmic" evidence="1">
    <location>
        <begin position="105"/>
        <end position="115"/>
    </location>
</feature>
<feature type="transmembrane region" description="Helical; Name=2" evidence="1">
    <location>
        <begin position="116"/>
        <end position="138"/>
    </location>
</feature>
<feature type="topological domain" description="Extracellular" evidence="1">
    <location>
        <begin position="139"/>
        <end position="157"/>
    </location>
</feature>
<feature type="transmembrane region" description="Helical; Name=3" evidence="1">
    <location>
        <begin position="158"/>
        <end position="177"/>
    </location>
</feature>
<feature type="topological domain" description="Cytoplasmic" evidence="1">
    <location>
        <begin position="178"/>
        <end position="196"/>
    </location>
</feature>
<feature type="transmembrane region" description="Helical; Name=4" evidence="1">
    <location>
        <begin position="197"/>
        <end position="216"/>
    </location>
</feature>
<feature type="topological domain" description="Extracellular" evidence="1">
    <location>
        <begin position="217"/>
        <end position="240"/>
    </location>
</feature>
<feature type="transmembrane region" description="Helical; Name=5" evidence="1">
    <location>
        <begin position="241"/>
        <end position="263"/>
    </location>
</feature>
<feature type="topological domain" description="Cytoplasmic" evidence="1">
    <location>
        <begin position="264"/>
        <end position="315"/>
    </location>
</feature>
<feature type="transmembrane region" description="Helical; Name=6" evidence="1">
    <location>
        <begin position="316"/>
        <end position="338"/>
    </location>
</feature>
<feature type="topological domain" description="Extracellular" evidence="1">
    <location>
        <begin position="339"/>
        <end position="352"/>
    </location>
</feature>
<feature type="transmembrane region" description="Helical; Name=7" evidence="1">
    <location>
        <begin position="353"/>
        <end position="375"/>
    </location>
</feature>
<feature type="topological domain" description="Cytoplasmic" evidence="1">
    <location>
        <begin position="376"/>
        <end position="419"/>
    </location>
</feature>
<feature type="glycosylation site" description="N-linked (GlcNAc...) asparagine" evidence="1">
    <location>
        <position position="16"/>
    </location>
</feature>
<feature type="glycosylation site" description="N-linked (GlcNAc...) asparagine" evidence="1">
    <location>
        <position position="28"/>
    </location>
</feature>
<feature type="glycosylation site" description="N-linked (GlcNAc...) asparagine" evidence="1">
    <location>
        <position position="62"/>
    </location>
</feature>
<feature type="sequence variant" id="VAR_049396" description="In dbSNP:rs35358396.">
    <original>V</original>
    <variation>M</variation>
    <location>
        <position position="21"/>
    </location>
</feature>
<protein>
    <recommendedName>
        <fullName>Probable G-protein coupled receptor 63</fullName>
    </recommendedName>
    <alternativeName>
        <fullName>PSP24-2</fullName>
    </alternativeName>
    <alternativeName>
        <fullName>PSP24-beta</fullName>
    </alternativeName>
</protein>
<proteinExistence type="evidence at transcript level"/>
<sequence>MVFSAVLTAFHTGTSNTTFVVYENTYMNITLPPPFQHPDLSPLLRYSFETMAPTGLSSLTVNSTAVPTTPAAFKSLNLPLQITLSAIMIFILFVSFLGNLVVCLMVYQKAAMRSAINILLASLAFADMLLAVLNMPFALVTILTTRWIFGKFFCRVSAMFFWLFVIEGVAILLIISIDRFLIIVQRQDKLNPYRAKVLIAVSWATSFCVAFPLAVGNPDLQIPSRAPQCVFGYTTNPGYQAYVILISLISFFIPFLVILYSFMGILNTLRHNALRIHSYPEGICLSQASKLGLMSLQRPFQMSIDMGFKTRAFTTILILFAVFIVCWAPFTTYSLVATFSKHFYYQHNFFEISTWLLWLCYLKSALNPLIYYWRIKKFHDACLDMMPKSFKFLPQLPGHTKRRIRPSAVYVCGEHRTVV</sequence>
<comment type="function">
    <text>Orphan receptor. May play a role in brain function.</text>
</comment>
<comment type="subcellular location">
    <subcellularLocation>
        <location>Cell membrane</location>
        <topology>Multi-pass membrane protein</topology>
    </subcellularLocation>
</comment>
<comment type="tissue specificity">
    <text>Expressed in brain; detected in the frontal cortex, with lower levels in the thalamus, caudate, hypothalamus and midbrain.</text>
</comment>
<comment type="similarity">
    <text evidence="2">Belongs to the G-protein coupled receptor 1 family.</text>
</comment>
<evidence type="ECO:0000255" key="1"/>
<evidence type="ECO:0000255" key="2">
    <source>
        <dbReference type="PROSITE-ProRule" id="PRU00521"/>
    </source>
</evidence>
<dbReference type="EMBL" id="AF317654">
    <property type="protein sequence ID" value="AAK12639.2"/>
    <property type="molecule type" value="Genomic_DNA"/>
</dbReference>
<dbReference type="EMBL" id="AB030566">
    <property type="protein sequence ID" value="BAB20031.1"/>
    <property type="molecule type" value="mRNA"/>
</dbReference>
<dbReference type="EMBL" id="AL033379">
    <property type="status" value="NOT_ANNOTATED_CDS"/>
    <property type="molecule type" value="Genomic_DNA"/>
</dbReference>
<dbReference type="EMBL" id="BC067465">
    <property type="protein sequence ID" value="AAH67465.1"/>
    <property type="molecule type" value="mRNA"/>
</dbReference>
<dbReference type="EMBL" id="BC067469">
    <property type="protein sequence ID" value="AAH67469.1"/>
    <property type="molecule type" value="mRNA"/>
</dbReference>
<dbReference type="CCDS" id="CCDS5036.1"/>
<dbReference type="RefSeq" id="NP_001137429.1">
    <property type="nucleotide sequence ID" value="NM_001143957.3"/>
</dbReference>
<dbReference type="RefSeq" id="NP_110411.1">
    <property type="nucleotide sequence ID" value="NM_030784.4"/>
</dbReference>
<dbReference type="RefSeq" id="XP_006715633.1">
    <property type="nucleotide sequence ID" value="XM_006715570.5"/>
</dbReference>
<dbReference type="RefSeq" id="XP_011534455.1">
    <property type="nucleotide sequence ID" value="XM_011536153.2"/>
</dbReference>
<dbReference type="RefSeq" id="XP_011534456.1">
    <property type="nucleotide sequence ID" value="XM_011536154.3"/>
</dbReference>
<dbReference type="RefSeq" id="XP_011534457.1">
    <property type="nucleotide sequence ID" value="XM_011536155.2"/>
</dbReference>
<dbReference type="RefSeq" id="XP_011534459.1">
    <property type="nucleotide sequence ID" value="XM_011536157.3"/>
</dbReference>
<dbReference type="RefSeq" id="XP_011534461.1">
    <property type="nucleotide sequence ID" value="XM_011536159.2"/>
</dbReference>
<dbReference type="RefSeq" id="XP_016866823.1">
    <property type="nucleotide sequence ID" value="XM_017011334.2"/>
</dbReference>
<dbReference type="RefSeq" id="XP_054212457.1">
    <property type="nucleotide sequence ID" value="XM_054356482.1"/>
</dbReference>
<dbReference type="RefSeq" id="XP_054212458.1">
    <property type="nucleotide sequence ID" value="XM_054356483.1"/>
</dbReference>
<dbReference type="RefSeq" id="XP_054212459.1">
    <property type="nucleotide sequence ID" value="XM_054356484.1"/>
</dbReference>
<dbReference type="RefSeq" id="XP_054212460.1">
    <property type="nucleotide sequence ID" value="XM_054356485.1"/>
</dbReference>
<dbReference type="RefSeq" id="XP_054212461.1">
    <property type="nucleotide sequence ID" value="XM_054356486.1"/>
</dbReference>
<dbReference type="RefSeq" id="XP_054212462.1">
    <property type="nucleotide sequence ID" value="XM_054356487.1"/>
</dbReference>
<dbReference type="SMR" id="Q9BZJ6"/>
<dbReference type="BioGRID" id="123500">
    <property type="interactions" value="1"/>
</dbReference>
<dbReference type="FunCoup" id="Q9BZJ6">
    <property type="interactions" value="764"/>
</dbReference>
<dbReference type="IntAct" id="Q9BZJ6">
    <property type="interactions" value="2"/>
</dbReference>
<dbReference type="MINT" id="Q9BZJ6"/>
<dbReference type="STRING" id="9606.ENSP00000229955"/>
<dbReference type="ChEMBL" id="CHEMBL4523916"/>
<dbReference type="GuidetoPHARMACOLOGY" id="112"/>
<dbReference type="GlyCosmos" id="Q9BZJ6">
    <property type="glycosylation" value="3 sites, No reported glycans"/>
</dbReference>
<dbReference type="GlyGen" id="Q9BZJ6">
    <property type="glycosylation" value="3 sites"/>
</dbReference>
<dbReference type="iPTMnet" id="Q9BZJ6"/>
<dbReference type="PhosphoSitePlus" id="Q9BZJ6"/>
<dbReference type="BioMuta" id="GPR63"/>
<dbReference type="DMDM" id="21263685"/>
<dbReference type="PaxDb" id="9606-ENSP00000229955"/>
<dbReference type="PeptideAtlas" id="Q9BZJ6"/>
<dbReference type="ProteomicsDB" id="79860"/>
<dbReference type="Antibodypedia" id="18869">
    <property type="antibodies" value="220 antibodies from 28 providers"/>
</dbReference>
<dbReference type="DNASU" id="81491"/>
<dbReference type="Ensembl" id="ENST00000229955.4">
    <property type="protein sequence ID" value="ENSP00000229955.2"/>
    <property type="gene ID" value="ENSG00000112218.9"/>
</dbReference>
<dbReference type="GeneID" id="81491"/>
<dbReference type="KEGG" id="hsa:81491"/>
<dbReference type="MANE-Select" id="ENST00000229955.4">
    <property type="protein sequence ID" value="ENSP00000229955.2"/>
    <property type="RefSeq nucleotide sequence ID" value="NM_030784.4"/>
    <property type="RefSeq protein sequence ID" value="NP_110411.1"/>
</dbReference>
<dbReference type="UCSC" id="uc003pou.4">
    <property type="organism name" value="human"/>
</dbReference>
<dbReference type="AGR" id="HGNC:13302"/>
<dbReference type="CTD" id="81491"/>
<dbReference type="DisGeNET" id="81491"/>
<dbReference type="GeneCards" id="GPR63"/>
<dbReference type="HGNC" id="HGNC:13302">
    <property type="gene designation" value="GPR63"/>
</dbReference>
<dbReference type="HPA" id="ENSG00000112218">
    <property type="expression patterns" value="Low tissue specificity"/>
</dbReference>
<dbReference type="MIM" id="606915">
    <property type="type" value="gene"/>
</dbReference>
<dbReference type="neXtProt" id="NX_Q9BZJ6"/>
<dbReference type="OpenTargets" id="ENSG00000112218"/>
<dbReference type="PharmGKB" id="PA28907"/>
<dbReference type="VEuPathDB" id="HostDB:ENSG00000112218"/>
<dbReference type="eggNOG" id="KOG3656">
    <property type="taxonomic scope" value="Eukaryota"/>
</dbReference>
<dbReference type="GeneTree" id="ENSGT00950000183001"/>
<dbReference type="HOGENOM" id="CLU_009579_3_9_1"/>
<dbReference type="InParanoid" id="Q9BZJ6"/>
<dbReference type="OMA" id="SKHFYYK"/>
<dbReference type="OrthoDB" id="10018052at2759"/>
<dbReference type="PAN-GO" id="Q9BZJ6">
    <property type="GO annotations" value="2 GO annotations based on evolutionary models"/>
</dbReference>
<dbReference type="PhylomeDB" id="Q9BZJ6"/>
<dbReference type="TreeFam" id="TF332301"/>
<dbReference type="PathwayCommons" id="Q9BZJ6"/>
<dbReference type="SignaLink" id="Q9BZJ6"/>
<dbReference type="BioGRID-ORCS" id="81491">
    <property type="hits" value="4 hits in 1143 CRISPR screens"/>
</dbReference>
<dbReference type="GeneWiki" id="GPR63"/>
<dbReference type="GenomeRNAi" id="81491"/>
<dbReference type="Pharos" id="Q9BZJ6">
    <property type="development level" value="Tchem"/>
</dbReference>
<dbReference type="PRO" id="PR:Q9BZJ6"/>
<dbReference type="Proteomes" id="UP000005640">
    <property type="component" value="Chromosome 6"/>
</dbReference>
<dbReference type="RNAct" id="Q9BZJ6">
    <property type="molecule type" value="protein"/>
</dbReference>
<dbReference type="Bgee" id="ENSG00000112218">
    <property type="expression patterns" value="Expressed in primordial germ cell in gonad and 96 other cell types or tissues"/>
</dbReference>
<dbReference type="ExpressionAtlas" id="Q9BZJ6">
    <property type="expression patterns" value="baseline and differential"/>
</dbReference>
<dbReference type="GO" id="GO:0005829">
    <property type="term" value="C:cytosol"/>
    <property type="evidence" value="ECO:0000314"/>
    <property type="project" value="HPA"/>
</dbReference>
<dbReference type="GO" id="GO:0005654">
    <property type="term" value="C:nucleoplasm"/>
    <property type="evidence" value="ECO:0000314"/>
    <property type="project" value="HPA"/>
</dbReference>
<dbReference type="GO" id="GO:0005886">
    <property type="term" value="C:plasma membrane"/>
    <property type="evidence" value="ECO:0000314"/>
    <property type="project" value="HPA"/>
</dbReference>
<dbReference type="GO" id="GO:0043235">
    <property type="term" value="C:receptor complex"/>
    <property type="evidence" value="ECO:0000314"/>
    <property type="project" value="MGI"/>
</dbReference>
<dbReference type="GO" id="GO:0004930">
    <property type="term" value="F:G protein-coupled receptor activity"/>
    <property type="evidence" value="ECO:0000318"/>
    <property type="project" value="GO_Central"/>
</dbReference>
<dbReference type="GO" id="GO:0007186">
    <property type="term" value="P:G protein-coupled receptor signaling pathway"/>
    <property type="evidence" value="ECO:0000318"/>
    <property type="project" value="GO_Central"/>
</dbReference>
<dbReference type="CDD" id="cd15404">
    <property type="entry name" value="7tmA_GPR63"/>
    <property type="match status" value="1"/>
</dbReference>
<dbReference type="FunFam" id="1.20.1070.10:FF:000080">
    <property type="entry name" value="probable G-protein coupled receptor 63"/>
    <property type="match status" value="1"/>
</dbReference>
<dbReference type="Gene3D" id="1.20.1070.10">
    <property type="entry name" value="Rhodopsin 7-helix transmembrane proteins"/>
    <property type="match status" value="1"/>
</dbReference>
<dbReference type="InterPro" id="IPR051880">
    <property type="entry name" value="GPC_Orphan_Receptors"/>
</dbReference>
<dbReference type="InterPro" id="IPR000276">
    <property type="entry name" value="GPCR_Rhodpsn"/>
</dbReference>
<dbReference type="InterPro" id="IPR017452">
    <property type="entry name" value="GPCR_Rhodpsn_7TM"/>
</dbReference>
<dbReference type="PANTHER" id="PTHR24245">
    <property type="entry name" value="G-PROTEIN COUPLED RECEPTOR"/>
    <property type="match status" value="1"/>
</dbReference>
<dbReference type="PANTHER" id="PTHR24245:SF1">
    <property type="entry name" value="G-PROTEIN COUPLED RECEPTOR 63-RELATED"/>
    <property type="match status" value="1"/>
</dbReference>
<dbReference type="Pfam" id="PF00001">
    <property type="entry name" value="7tm_1"/>
    <property type="match status" value="1"/>
</dbReference>
<dbReference type="PRINTS" id="PR00237">
    <property type="entry name" value="GPCRRHODOPSN"/>
</dbReference>
<dbReference type="SUPFAM" id="SSF81321">
    <property type="entry name" value="Family A G protein-coupled receptor-like"/>
    <property type="match status" value="1"/>
</dbReference>
<dbReference type="PROSITE" id="PS50262">
    <property type="entry name" value="G_PROTEIN_RECEP_F1_2"/>
    <property type="match status" value="1"/>
</dbReference>
<accession>Q9BZJ6</accession>
<accession>Q9UJH3</accession>
<reference key="1">
    <citation type="journal article" date="2001" name="Brain Res. Mol. Brain Res.">
        <title>Identification of four novel human G protein-coupled receptors expressed in the brain.</title>
        <authorList>
            <person name="Lee D.K."/>
            <person name="George S.R."/>
            <person name="Cheng R."/>
            <person name="Nguyen T."/>
            <person name="Liu Y."/>
            <person name="Brown M."/>
            <person name="Lynch K.R."/>
            <person name="O'Dowd B.F."/>
        </authorList>
    </citation>
    <scope>NUCLEOTIDE SEQUENCE [GENOMIC DNA]</scope>
</reference>
<reference key="2">
    <citation type="journal article" date="2000" name="Biochem. Biophys. Res. Commun.">
        <title>Brain-specific expression of novel G-protein-coupled receptors, with homologies to Xenopus PSP24 and human GPR45.</title>
        <authorList>
            <person name="Kawasawa Y."/>
            <person name="Kume K."/>
            <person name="Nakade S."/>
            <person name="Haga H."/>
            <person name="Izumi T."/>
            <person name="Shimizu T."/>
        </authorList>
    </citation>
    <scope>NUCLEOTIDE SEQUENCE [MRNA]</scope>
    <source>
        <tissue>Brain</tissue>
    </source>
</reference>
<reference key="3">
    <citation type="journal article" date="2003" name="Nature">
        <title>The DNA sequence and analysis of human chromosome 6.</title>
        <authorList>
            <person name="Mungall A.J."/>
            <person name="Palmer S.A."/>
            <person name="Sims S.K."/>
            <person name="Edwards C.A."/>
            <person name="Ashurst J.L."/>
            <person name="Wilming L."/>
            <person name="Jones M.C."/>
            <person name="Horton R."/>
            <person name="Hunt S.E."/>
            <person name="Scott C.E."/>
            <person name="Gilbert J.G.R."/>
            <person name="Clamp M.E."/>
            <person name="Bethel G."/>
            <person name="Milne S."/>
            <person name="Ainscough R."/>
            <person name="Almeida J.P."/>
            <person name="Ambrose K.D."/>
            <person name="Andrews T.D."/>
            <person name="Ashwell R.I.S."/>
            <person name="Babbage A.K."/>
            <person name="Bagguley C.L."/>
            <person name="Bailey J."/>
            <person name="Banerjee R."/>
            <person name="Barker D.J."/>
            <person name="Barlow K.F."/>
            <person name="Bates K."/>
            <person name="Beare D.M."/>
            <person name="Beasley H."/>
            <person name="Beasley O."/>
            <person name="Bird C.P."/>
            <person name="Blakey S.E."/>
            <person name="Bray-Allen S."/>
            <person name="Brook J."/>
            <person name="Brown A.J."/>
            <person name="Brown J.Y."/>
            <person name="Burford D.C."/>
            <person name="Burrill W."/>
            <person name="Burton J."/>
            <person name="Carder C."/>
            <person name="Carter N.P."/>
            <person name="Chapman J.C."/>
            <person name="Clark S.Y."/>
            <person name="Clark G."/>
            <person name="Clee C.M."/>
            <person name="Clegg S."/>
            <person name="Cobley V."/>
            <person name="Collier R.E."/>
            <person name="Collins J.E."/>
            <person name="Colman L.K."/>
            <person name="Corby N.R."/>
            <person name="Coville G.J."/>
            <person name="Culley K.M."/>
            <person name="Dhami P."/>
            <person name="Davies J."/>
            <person name="Dunn M."/>
            <person name="Earthrowl M.E."/>
            <person name="Ellington A.E."/>
            <person name="Evans K.A."/>
            <person name="Faulkner L."/>
            <person name="Francis M.D."/>
            <person name="Frankish A."/>
            <person name="Frankland J."/>
            <person name="French L."/>
            <person name="Garner P."/>
            <person name="Garnett J."/>
            <person name="Ghori M.J."/>
            <person name="Gilby L.M."/>
            <person name="Gillson C.J."/>
            <person name="Glithero R.J."/>
            <person name="Grafham D.V."/>
            <person name="Grant M."/>
            <person name="Gribble S."/>
            <person name="Griffiths C."/>
            <person name="Griffiths M.N.D."/>
            <person name="Hall R."/>
            <person name="Halls K.S."/>
            <person name="Hammond S."/>
            <person name="Harley J.L."/>
            <person name="Hart E.A."/>
            <person name="Heath P.D."/>
            <person name="Heathcott R."/>
            <person name="Holmes S.J."/>
            <person name="Howden P.J."/>
            <person name="Howe K.L."/>
            <person name="Howell G.R."/>
            <person name="Huckle E."/>
            <person name="Humphray S.J."/>
            <person name="Humphries M.D."/>
            <person name="Hunt A.R."/>
            <person name="Johnson C.M."/>
            <person name="Joy A.A."/>
            <person name="Kay M."/>
            <person name="Keenan S.J."/>
            <person name="Kimberley A.M."/>
            <person name="King A."/>
            <person name="Laird G.K."/>
            <person name="Langford C."/>
            <person name="Lawlor S."/>
            <person name="Leongamornlert D.A."/>
            <person name="Leversha M."/>
            <person name="Lloyd C.R."/>
            <person name="Lloyd D.M."/>
            <person name="Loveland J.E."/>
            <person name="Lovell J."/>
            <person name="Martin S."/>
            <person name="Mashreghi-Mohammadi M."/>
            <person name="Maslen G.L."/>
            <person name="Matthews L."/>
            <person name="McCann O.T."/>
            <person name="McLaren S.J."/>
            <person name="McLay K."/>
            <person name="McMurray A."/>
            <person name="Moore M.J.F."/>
            <person name="Mullikin J.C."/>
            <person name="Niblett D."/>
            <person name="Nickerson T."/>
            <person name="Novik K.L."/>
            <person name="Oliver K."/>
            <person name="Overton-Larty E.K."/>
            <person name="Parker A."/>
            <person name="Patel R."/>
            <person name="Pearce A.V."/>
            <person name="Peck A.I."/>
            <person name="Phillimore B.J.C.T."/>
            <person name="Phillips S."/>
            <person name="Plumb R.W."/>
            <person name="Porter K.M."/>
            <person name="Ramsey Y."/>
            <person name="Ranby S.A."/>
            <person name="Rice C.M."/>
            <person name="Ross M.T."/>
            <person name="Searle S.M."/>
            <person name="Sehra H.K."/>
            <person name="Sheridan E."/>
            <person name="Skuce C.D."/>
            <person name="Smith S."/>
            <person name="Smith M."/>
            <person name="Spraggon L."/>
            <person name="Squares S.L."/>
            <person name="Steward C.A."/>
            <person name="Sycamore N."/>
            <person name="Tamlyn-Hall G."/>
            <person name="Tester J."/>
            <person name="Theaker A.J."/>
            <person name="Thomas D.W."/>
            <person name="Thorpe A."/>
            <person name="Tracey A."/>
            <person name="Tromans A."/>
            <person name="Tubby B."/>
            <person name="Wall M."/>
            <person name="Wallis J.M."/>
            <person name="West A.P."/>
            <person name="White S.S."/>
            <person name="Whitehead S.L."/>
            <person name="Whittaker H."/>
            <person name="Wild A."/>
            <person name="Willey D.J."/>
            <person name="Wilmer T.E."/>
            <person name="Wood J.M."/>
            <person name="Wray P.W."/>
            <person name="Wyatt J.C."/>
            <person name="Young L."/>
            <person name="Younger R.M."/>
            <person name="Bentley D.R."/>
            <person name="Coulson A."/>
            <person name="Durbin R.M."/>
            <person name="Hubbard T."/>
            <person name="Sulston J.E."/>
            <person name="Dunham I."/>
            <person name="Rogers J."/>
            <person name="Beck S."/>
        </authorList>
    </citation>
    <scope>NUCLEOTIDE SEQUENCE [LARGE SCALE GENOMIC DNA]</scope>
</reference>
<reference key="4">
    <citation type="journal article" date="2004" name="Genome Res.">
        <title>The status, quality, and expansion of the NIH full-length cDNA project: the Mammalian Gene Collection (MGC).</title>
        <authorList>
            <consortium name="The MGC Project Team"/>
        </authorList>
    </citation>
    <scope>NUCLEOTIDE SEQUENCE [LARGE SCALE MRNA]</scope>
</reference>
<gene>
    <name type="primary">GPR63</name>
    <name type="synonym">PSP24B</name>
</gene>
<organism>
    <name type="scientific">Homo sapiens</name>
    <name type="common">Human</name>
    <dbReference type="NCBI Taxonomy" id="9606"/>
    <lineage>
        <taxon>Eukaryota</taxon>
        <taxon>Metazoa</taxon>
        <taxon>Chordata</taxon>
        <taxon>Craniata</taxon>
        <taxon>Vertebrata</taxon>
        <taxon>Euteleostomi</taxon>
        <taxon>Mammalia</taxon>
        <taxon>Eutheria</taxon>
        <taxon>Euarchontoglires</taxon>
        <taxon>Primates</taxon>
        <taxon>Haplorrhini</taxon>
        <taxon>Catarrhini</taxon>
        <taxon>Hominidae</taxon>
        <taxon>Homo</taxon>
    </lineage>
</organism>
<name>GPR63_HUMAN</name>